<accession>P00017</accession>
<sequence>MGDIEKGKKIFVQKCSQCHTVEKGGKHKTGPNLHGIFGRKTGQAEGFSYTDANKNKGITWGEDTLMEYLENPKKYIPGTKMIFAGIKKKSERADLIAYLKDATSK</sequence>
<feature type="initiator methionine" description="Removed" evidence="1">
    <location>
        <position position="1"/>
    </location>
</feature>
<feature type="chain" id="PRO_0000108238" description="Cytochrome c">
    <location>
        <begin position="2"/>
        <end position="105"/>
    </location>
</feature>
<feature type="binding site" description="covalent">
    <location>
        <position position="15"/>
    </location>
    <ligand>
        <name>heme c</name>
        <dbReference type="ChEBI" id="CHEBI:61717"/>
    </ligand>
</feature>
<feature type="binding site" description="covalent">
    <location>
        <position position="18"/>
    </location>
    <ligand>
        <name>heme c</name>
        <dbReference type="ChEBI" id="CHEBI:61717"/>
    </ligand>
</feature>
<feature type="binding site" description="axial binding residue">
    <location>
        <position position="19"/>
    </location>
    <ligand>
        <name>heme c</name>
        <dbReference type="ChEBI" id="CHEBI:61717"/>
    </ligand>
    <ligandPart>
        <name>Fe</name>
        <dbReference type="ChEBI" id="CHEBI:18248"/>
    </ligandPart>
</feature>
<feature type="binding site" description="axial binding residue">
    <location>
        <position position="81"/>
    </location>
    <ligand>
        <name>heme c</name>
        <dbReference type="ChEBI" id="CHEBI:61717"/>
    </ligand>
    <ligandPart>
        <name>Fe</name>
        <dbReference type="ChEBI" id="CHEBI:18248"/>
    </ligandPart>
</feature>
<feature type="modified residue" description="N-acetylglycine" evidence="1">
    <location>
        <position position="2"/>
    </location>
</feature>
<keyword id="KW-0007">Acetylation</keyword>
<keyword id="KW-0903">Direct protein sequencing</keyword>
<keyword id="KW-0249">Electron transport</keyword>
<keyword id="KW-0349">Heme</keyword>
<keyword id="KW-0408">Iron</keyword>
<keyword id="KW-0479">Metal-binding</keyword>
<keyword id="KW-0496">Mitochondrion</keyword>
<keyword id="KW-0679">Respiratory chain</keyword>
<keyword id="KW-0813">Transport</keyword>
<gene>
    <name type="primary">CYC</name>
</gene>
<dbReference type="PIR" id="A00018">
    <property type="entry name" value="CCPN"/>
</dbReference>
<dbReference type="SMR" id="P00017"/>
<dbReference type="GO" id="GO:0005758">
    <property type="term" value="C:mitochondrial intermembrane space"/>
    <property type="evidence" value="ECO:0007669"/>
    <property type="project" value="UniProtKB-SubCell"/>
</dbReference>
<dbReference type="GO" id="GO:0009055">
    <property type="term" value="F:electron transfer activity"/>
    <property type="evidence" value="ECO:0007669"/>
    <property type="project" value="InterPro"/>
</dbReference>
<dbReference type="GO" id="GO:0020037">
    <property type="term" value="F:heme binding"/>
    <property type="evidence" value="ECO:0007669"/>
    <property type="project" value="InterPro"/>
</dbReference>
<dbReference type="GO" id="GO:0046872">
    <property type="term" value="F:metal ion binding"/>
    <property type="evidence" value="ECO:0007669"/>
    <property type="project" value="UniProtKB-KW"/>
</dbReference>
<dbReference type="FunFam" id="1.10.760.10:FF:000008">
    <property type="entry name" value="Cytochrome c"/>
    <property type="match status" value="1"/>
</dbReference>
<dbReference type="Gene3D" id="1.10.760.10">
    <property type="entry name" value="Cytochrome c-like domain"/>
    <property type="match status" value="1"/>
</dbReference>
<dbReference type="InterPro" id="IPR009056">
    <property type="entry name" value="Cyt_c-like_dom"/>
</dbReference>
<dbReference type="InterPro" id="IPR036909">
    <property type="entry name" value="Cyt_c-like_dom_sf"/>
</dbReference>
<dbReference type="InterPro" id="IPR002327">
    <property type="entry name" value="Cyt_c_1A/1B"/>
</dbReference>
<dbReference type="PANTHER" id="PTHR11961">
    <property type="entry name" value="CYTOCHROME C"/>
    <property type="match status" value="1"/>
</dbReference>
<dbReference type="Pfam" id="PF00034">
    <property type="entry name" value="Cytochrom_C"/>
    <property type="match status" value="1"/>
</dbReference>
<dbReference type="PRINTS" id="PR00604">
    <property type="entry name" value="CYTCHRMECIAB"/>
</dbReference>
<dbReference type="SUPFAM" id="SSF46626">
    <property type="entry name" value="Cytochrome c"/>
    <property type="match status" value="1"/>
</dbReference>
<dbReference type="PROSITE" id="PS51007">
    <property type="entry name" value="CYTC"/>
    <property type="match status" value="1"/>
</dbReference>
<reference key="1">
    <citation type="submission" date="1967-07" db="PIR data bank">
        <authorList>
            <person name="Chan S.K."/>
            <person name="Tulloss I."/>
            <person name="Margoliash E."/>
        </authorList>
    </citation>
    <scope>PROTEIN SEQUENCE OF 2-105</scope>
    <scope>ACETYLATION AT GLY-2</scope>
</reference>
<name>CYC_APTPA</name>
<comment type="function">
    <text>Electron carrier protein. The oxidized form of the cytochrome c heme group can accept an electron from the heme group of the cytochrome c1 subunit of cytochrome reductase. Cytochrome c then transfers this electron to the cytochrome oxidase complex, the final protein carrier in the mitochondrial electron-transport chain.</text>
</comment>
<comment type="subcellular location">
    <subcellularLocation>
        <location>Mitochondrion intermembrane space</location>
    </subcellularLocation>
    <text>Loosely associated with the inner membrane.</text>
</comment>
<comment type="PTM">
    <text>Binds 1 heme c group covalently per subunit.</text>
</comment>
<comment type="similarity">
    <text evidence="2">Belongs to the cytochrome c family.</text>
</comment>
<comment type="online information" name="Protein Spotlight">
    <link uri="https://www.proteinspotlight.org/back_issues/076"/>
    <text>Life shuttle - Issue 76 of November 2006</text>
</comment>
<proteinExistence type="evidence at protein level"/>
<evidence type="ECO:0000269" key="1">
    <source ref="1"/>
</evidence>
<evidence type="ECO:0000305" key="2"/>
<protein>
    <recommendedName>
        <fullName>Cytochrome c</fullName>
    </recommendedName>
</protein>
<organism>
    <name type="scientific">Aptenodytes patagonicus</name>
    <name type="common">King penguin</name>
    <dbReference type="NCBI Taxonomy" id="9234"/>
    <lineage>
        <taxon>Eukaryota</taxon>
        <taxon>Metazoa</taxon>
        <taxon>Chordata</taxon>
        <taxon>Craniata</taxon>
        <taxon>Vertebrata</taxon>
        <taxon>Euteleostomi</taxon>
        <taxon>Archelosauria</taxon>
        <taxon>Archosauria</taxon>
        <taxon>Dinosauria</taxon>
        <taxon>Saurischia</taxon>
        <taxon>Theropoda</taxon>
        <taxon>Coelurosauria</taxon>
        <taxon>Aves</taxon>
        <taxon>Neognathae</taxon>
        <taxon>Neoaves</taxon>
        <taxon>Aequornithes</taxon>
        <taxon>Sphenisciformes</taxon>
        <taxon>Spheniscidae</taxon>
        <taxon>Aptenodytes</taxon>
    </lineage>
</organism>